<dbReference type="EC" id="2.7.4.6" evidence="1"/>
<dbReference type="EMBL" id="L42023">
    <property type="protein sequence ID" value="AAC22532.1"/>
    <property type="molecule type" value="Genomic_DNA"/>
</dbReference>
<dbReference type="PIR" id="D64099">
    <property type="entry name" value="D64099"/>
</dbReference>
<dbReference type="RefSeq" id="NP_439037.1">
    <property type="nucleotide sequence ID" value="NC_000907.1"/>
</dbReference>
<dbReference type="SMR" id="P43802"/>
<dbReference type="STRING" id="71421.HI_0876"/>
<dbReference type="EnsemblBacteria" id="AAC22532">
    <property type="protein sequence ID" value="AAC22532"/>
    <property type="gene ID" value="HI_0876"/>
</dbReference>
<dbReference type="KEGG" id="hin:HI_0876"/>
<dbReference type="PATRIC" id="fig|71421.8.peg.918"/>
<dbReference type="eggNOG" id="COG0105">
    <property type="taxonomic scope" value="Bacteria"/>
</dbReference>
<dbReference type="HOGENOM" id="CLU_060216_8_1_6"/>
<dbReference type="OrthoDB" id="9801161at2"/>
<dbReference type="PhylomeDB" id="P43802"/>
<dbReference type="BioCyc" id="HINF71421:G1GJ1-916-MONOMER"/>
<dbReference type="Proteomes" id="UP000000579">
    <property type="component" value="Chromosome"/>
</dbReference>
<dbReference type="GO" id="GO:0005737">
    <property type="term" value="C:cytoplasm"/>
    <property type="evidence" value="ECO:0007669"/>
    <property type="project" value="UniProtKB-SubCell"/>
</dbReference>
<dbReference type="GO" id="GO:0005524">
    <property type="term" value="F:ATP binding"/>
    <property type="evidence" value="ECO:0007669"/>
    <property type="project" value="UniProtKB-UniRule"/>
</dbReference>
<dbReference type="GO" id="GO:0046872">
    <property type="term" value="F:metal ion binding"/>
    <property type="evidence" value="ECO:0007669"/>
    <property type="project" value="UniProtKB-KW"/>
</dbReference>
<dbReference type="GO" id="GO:0004550">
    <property type="term" value="F:nucleoside diphosphate kinase activity"/>
    <property type="evidence" value="ECO:0007669"/>
    <property type="project" value="UniProtKB-UniRule"/>
</dbReference>
<dbReference type="GO" id="GO:0006241">
    <property type="term" value="P:CTP biosynthetic process"/>
    <property type="evidence" value="ECO:0007669"/>
    <property type="project" value="UniProtKB-UniRule"/>
</dbReference>
<dbReference type="GO" id="GO:0006183">
    <property type="term" value="P:GTP biosynthetic process"/>
    <property type="evidence" value="ECO:0007669"/>
    <property type="project" value="UniProtKB-UniRule"/>
</dbReference>
<dbReference type="GO" id="GO:0006163">
    <property type="term" value="P:purine nucleotide metabolic process"/>
    <property type="evidence" value="ECO:0000318"/>
    <property type="project" value="GO_Central"/>
</dbReference>
<dbReference type="GO" id="GO:0006220">
    <property type="term" value="P:pyrimidine nucleotide metabolic process"/>
    <property type="evidence" value="ECO:0000318"/>
    <property type="project" value="GO_Central"/>
</dbReference>
<dbReference type="GO" id="GO:0006228">
    <property type="term" value="P:UTP biosynthetic process"/>
    <property type="evidence" value="ECO:0007669"/>
    <property type="project" value="UniProtKB-UniRule"/>
</dbReference>
<dbReference type="CDD" id="cd04413">
    <property type="entry name" value="NDPk_I"/>
    <property type="match status" value="1"/>
</dbReference>
<dbReference type="FunFam" id="3.30.70.141:FF:000001">
    <property type="entry name" value="Nucleoside diphosphate kinase"/>
    <property type="match status" value="1"/>
</dbReference>
<dbReference type="Gene3D" id="3.30.70.141">
    <property type="entry name" value="Nucleoside diphosphate kinase-like domain"/>
    <property type="match status" value="1"/>
</dbReference>
<dbReference type="HAMAP" id="MF_00451">
    <property type="entry name" value="NDP_kinase"/>
    <property type="match status" value="1"/>
</dbReference>
<dbReference type="InterPro" id="IPR034907">
    <property type="entry name" value="NDK-like_dom"/>
</dbReference>
<dbReference type="InterPro" id="IPR036850">
    <property type="entry name" value="NDK-like_dom_sf"/>
</dbReference>
<dbReference type="InterPro" id="IPR001564">
    <property type="entry name" value="Nucleoside_diP_kinase"/>
</dbReference>
<dbReference type="InterPro" id="IPR023005">
    <property type="entry name" value="Nucleoside_diP_kinase_AS"/>
</dbReference>
<dbReference type="NCBIfam" id="NF001908">
    <property type="entry name" value="PRK00668.1"/>
    <property type="match status" value="1"/>
</dbReference>
<dbReference type="PANTHER" id="PTHR46161">
    <property type="entry name" value="NUCLEOSIDE DIPHOSPHATE KINASE"/>
    <property type="match status" value="1"/>
</dbReference>
<dbReference type="PANTHER" id="PTHR46161:SF3">
    <property type="entry name" value="NUCLEOSIDE DIPHOSPHATE KINASE DDB_G0292928-RELATED"/>
    <property type="match status" value="1"/>
</dbReference>
<dbReference type="Pfam" id="PF00334">
    <property type="entry name" value="NDK"/>
    <property type="match status" value="1"/>
</dbReference>
<dbReference type="PRINTS" id="PR01243">
    <property type="entry name" value="NUCDPKINASE"/>
</dbReference>
<dbReference type="SMART" id="SM00562">
    <property type="entry name" value="NDK"/>
    <property type="match status" value="1"/>
</dbReference>
<dbReference type="SUPFAM" id="SSF54919">
    <property type="entry name" value="Nucleoside diphosphate kinase, NDK"/>
    <property type="match status" value="1"/>
</dbReference>
<dbReference type="PROSITE" id="PS00469">
    <property type="entry name" value="NDPK"/>
    <property type="match status" value="1"/>
</dbReference>
<dbReference type="PROSITE" id="PS51374">
    <property type="entry name" value="NDPK_LIKE"/>
    <property type="match status" value="1"/>
</dbReference>
<proteinExistence type="inferred from homology"/>
<sequence>MMTERTFSIIKPDVVKRNLIGAILTRFEQNGFKIIASKMVRLTREQAEGFYAEHQGKEFFVPLVEYMMSSPIVVSVLEKENAVKDYRTLIGTTNPETAAEGTIRKDFALSQRENSVHGSDSIESANREIAYFFTNSEIFER</sequence>
<organism>
    <name type="scientific">Haemophilus influenzae (strain ATCC 51907 / DSM 11121 / KW20 / Rd)</name>
    <dbReference type="NCBI Taxonomy" id="71421"/>
    <lineage>
        <taxon>Bacteria</taxon>
        <taxon>Pseudomonadati</taxon>
        <taxon>Pseudomonadota</taxon>
        <taxon>Gammaproteobacteria</taxon>
        <taxon>Pasteurellales</taxon>
        <taxon>Pasteurellaceae</taxon>
        <taxon>Haemophilus</taxon>
    </lineage>
</organism>
<comment type="function">
    <text evidence="1">Major role in the synthesis of nucleoside triphosphates other than ATP. The ATP gamma phosphate is transferred to the NDP beta phosphate via a ping-pong mechanism, using a phosphorylated active-site intermediate.</text>
</comment>
<comment type="catalytic activity">
    <reaction evidence="1">
        <text>a 2'-deoxyribonucleoside 5'-diphosphate + ATP = a 2'-deoxyribonucleoside 5'-triphosphate + ADP</text>
        <dbReference type="Rhea" id="RHEA:44640"/>
        <dbReference type="ChEBI" id="CHEBI:30616"/>
        <dbReference type="ChEBI" id="CHEBI:61560"/>
        <dbReference type="ChEBI" id="CHEBI:73316"/>
        <dbReference type="ChEBI" id="CHEBI:456216"/>
        <dbReference type="EC" id="2.7.4.6"/>
    </reaction>
</comment>
<comment type="catalytic activity">
    <reaction evidence="1">
        <text>a ribonucleoside 5'-diphosphate + ATP = a ribonucleoside 5'-triphosphate + ADP</text>
        <dbReference type="Rhea" id="RHEA:18113"/>
        <dbReference type="ChEBI" id="CHEBI:30616"/>
        <dbReference type="ChEBI" id="CHEBI:57930"/>
        <dbReference type="ChEBI" id="CHEBI:61557"/>
        <dbReference type="ChEBI" id="CHEBI:456216"/>
        <dbReference type="EC" id="2.7.4.6"/>
    </reaction>
</comment>
<comment type="cofactor">
    <cofactor evidence="1">
        <name>Mg(2+)</name>
        <dbReference type="ChEBI" id="CHEBI:18420"/>
    </cofactor>
</comment>
<comment type="subunit">
    <text evidence="1">Homotetramer.</text>
</comment>
<comment type="subcellular location">
    <subcellularLocation>
        <location evidence="1">Cytoplasm</location>
    </subcellularLocation>
</comment>
<comment type="similarity">
    <text evidence="1 2">Belongs to the NDK family.</text>
</comment>
<protein>
    <recommendedName>
        <fullName evidence="1">Nucleoside diphosphate kinase</fullName>
        <shortName evidence="1">NDK</shortName>
        <shortName evidence="1">NDP kinase</shortName>
        <ecNumber evidence="1">2.7.4.6</ecNumber>
    </recommendedName>
    <alternativeName>
        <fullName evidence="1">Nucleoside-2-P kinase</fullName>
    </alternativeName>
</protein>
<evidence type="ECO:0000255" key="1">
    <source>
        <dbReference type="HAMAP-Rule" id="MF_00451"/>
    </source>
</evidence>
<evidence type="ECO:0000305" key="2"/>
<reference key="1">
    <citation type="journal article" date="1995" name="Science">
        <title>Whole-genome random sequencing and assembly of Haemophilus influenzae Rd.</title>
        <authorList>
            <person name="Fleischmann R.D."/>
            <person name="Adams M.D."/>
            <person name="White O."/>
            <person name="Clayton R.A."/>
            <person name="Kirkness E.F."/>
            <person name="Kerlavage A.R."/>
            <person name="Bult C.J."/>
            <person name="Tomb J.-F."/>
            <person name="Dougherty B.A."/>
            <person name="Merrick J.M."/>
            <person name="McKenney K."/>
            <person name="Sutton G.G."/>
            <person name="FitzHugh W."/>
            <person name="Fields C.A."/>
            <person name="Gocayne J.D."/>
            <person name="Scott J.D."/>
            <person name="Shirley R."/>
            <person name="Liu L.-I."/>
            <person name="Glodek A."/>
            <person name="Kelley J.M."/>
            <person name="Weidman J.F."/>
            <person name="Phillips C.A."/>
            <person name="Spriggs T."/>
            <person name="Hedblom E."/>
            <person name="Cotton M.D."/>
            <person name="Utterback T.R."/>
            <person name="Hanna M.C."/>
            <person name="Nguyen D.T."/>
            <person name="Saudek D.M."/>
            <person name="Brandon R.C."/>
            <person name="Fine L.D."/>
            <person name="Fritchman J.L."/>
            <person name="Fuhrmann J.L."/>
            <person name="Geoghagen N.S.M."/>
            <person name="Gnehm C.L."/>
            <person name="McDonald L.A."/>
            <person name="Small K.V."/>
            <person name="Fraser C.M."/>
            <person name="Smith H.O."/>
            <person name="Venter J.C."/>
        </authorList>
    </citation>
    <scope>NUCLEOTIDE SEQUENCE [LARGE SCALE GENOMIC DNA]</scope>
    <source>
        <strain>ATCC 51907 / DSM 11121 / KW20 / Rd</strain>
    </source>
</reference>
<feature type="chain" id="PRO_0000136990" description="Nucleoside diphosphate kinase">
    <location>
        <begin position="1"/>
        <end position="141"/>
    </location>
</feature>
<feature type="active site" description="Pros-phosphohistidine intermediate" evidence="1">
    <location>
        <position position="117"/>
    </location>
</feature>
<feature type="binding site" evidence="1">
    <location>
        <position position="11"/>
    </location>
    <ligand>
        <name>ATP</name>
        <dbReference type="ChEBI" id="CHEBI:30616"/>
    </ligand>
</feature>
<feature type="binding site" evidence="1">
    <location>
        <position position="59"/>
    </location>
    <ligand>
        <name>ATP</name>
        <dbReference type="ChEBI" id="CHEBI:30616"/>
    </ligand>
</feature>
<feature type="binding site" evidence="1">
    <location>
        <position position="87"/>
    </location>
    <ligand>
        <name>ATP</name>
        <dbReference type="ChEBI" id="CHEBI:30616"/>
    </ligand>
</feature>
<feature type="binding site" evidence="1">
    <location>
        <position position="93"/>
    </location>
    <ligand>
        <name>ATP</name>
        <dbReference type="ChEBI" id="CHEBI:30616"/>
    </ligand>
</feature>
<feature type="binding site" evidence="1">
    <location>
        <position position="104"/>
    </location>
    <ligand>
        <name>ATP</name>
        <dbReference type="ChEBI" id="CHEBI:30616"/>
    </ligand>
</feature>
<feature type="binding site" evidence="1">
    <location>
        <position position="114"/>
    </location>
    <ligand>
        <name>ATP</name>
        <dbReference type="ChEBI" id="CHEBI:30616"/>
    </ligand>
</feature>
<keyword id="KW-0067">ATP-binding</keyword>
<keyword id="KW-0963">Cytoplasm</keyword>
<keyword id="KW-0418">Kinase</keyword>
<keyword id="KW-0460">Magnesium</keyword>
<keyword id="KW-0479">Metal-binding</keyword>
<keyword id="KW-0546">Nucleotide metabolism</keyword>
<keyword id="KW-0547">Nucleotide-binding</keyword>
<keyword id="KW-0597">Phosphoprotein</keyword>
<keyword id="KW-1185">Reference proteome</keyword>
<keyword id="KW-0808">Transferase</keyword>
<name>NDK_HAEIN</name>
<accession>P43802</accession>
<gene>
    <name evidence="1" type="primary">ndk</name>
    <name type="ordered locus">HI_0876</name>
</gene>